<accession>P81782</accession>
<sequence length="63" mass="7285">MECYRCGVSGCHLKITCSAEETFCYKWLNKISNERWLGCAKTCTEIDTWNVYNKCCTTNLCNT</sequence>
<name>3NOJ_BUNCA</name>
<organism>
    <name type="scientific">Bungarus candidus</name>
    <name type="common">Malayan krait</name>
    <dbReference type="NCBI Taxonomy" id="92438"/>
    <lineage>
        <taxon>Eukaryota</taxon>
        <taxon>Metazoa</taxon>
        <taxon>Chordata</taxon>
        <taxon>Craniata</taxon>
        <taxon>Vertebrata</taxon>
        <taxon>Euteleostomi</taxon>
        <taxon>Lepidosauria</taxon>
        <taxon>Squamata</taxon>
        <taxon>Bifurcata</taxon>
        <taxon>Unidentata</taxon>
        <taxon>Episquamata</taxon>
        <taxon>Toxicofera</taxon>
        <taxon>Serpentes</taxon>
        <taxon>Colubroidea</taxon>
        <taxon>Elapidae</taxon>
        <taxon>Bungarinae</taxon>
        <taxon>Bungarus</taxon>
    </lineage>
</organism>
<proteinExistence type="evidence at protein level"/>
<comment type="function">
    <text evidence="2">This toxin is described as enhancing presynaptic acetylcholine release, but neither experimental results, nor references to other sources are available.</text>
</comment>
<comment type="subcellular location">
    <subcellularLocation>
        <location evidence="1">Secreted</location>
    </subcellularLocation>
</comment>
<comment type="tissue specificity">
    <text evidence="3">Expressed by the venom gland.</text>
</comment>
<comment type="mass spectrometry" mass="7275.43" method="Electrospray" evidence="1"/>
<comment type="similarity">
    <text evidence="3">Belongs to the three-finger toxin family. Ancestral subfamily. Orphan group XIX sub-subfamily.</text>
</comment>
<dbReference type="PDB" id="1F94">
    <property type="method" value="X-ray"/>
    <property type="resolution" value="0.97 A"/>
    <property type="chains" value="A=1-63"/>
</dbReference>
<dbReference type="PDB" id="1IJC">
    <property type="method" value="NMR"/>
    <property type="chains" value="A=1-63"/>
</dbReference>
<dbReference type="PDBsum" id="1F94"/>
<dbReference type="PDBsum" id="1IJC"/>
<dbReference type="SMR" id="P81782"/>
<dbReference type="TCDB" id="8.B.23.2.3">
    <property type="family name" value="the mambalgin (mambalgin) family"/>
</dbReference>
<dbReference type="EvolutionaryTrace" id="P81782"/>
<dbReference type="GO" id="GO:0005576">
    <property type="term" value="C:extracellular region"/>
    <property type="evidence" value="ECO:0007669"/>
    <property type="project" value="UniProtKB-SubCell"/>
</dbReference>
<dbReference type="GO" id="GO:0090729">
    <property type="term" value="F:toxin activity"/>
    <property type="evidence" value="ECO:0007669"/>
    <property type="project" value="UniProtKB-KW"/>
</dbReference>
<dbReference type="Gene3D" id="2.10.60.10">
    <property type="entry name" value="CD59"/>
    <property type="match status" value="1"/>
</dbReference>
<dbReference type="InterPro" id="IPR045860">
    <property type="entry name" value="Snake_toxin-like_sf"/>
</dbReference>
<dbReference type="InterPro" id="IPR035076">
    <property type="entry name" value="Toxin/TOLIP"/>
</dbReference>
<dbReference type="Pfam" id="PF00087">
    <property type="entry name" value="Toxin_TOLIP"/>
    <property type="match status" value="1"/>
</dbReference>
<dbReference type="SUPFAM" id="SSF57302">
    <property type="entry name" value="Snake toxin-like"/>
    <property type="match status" value="1"/>
</dbReference>
<protein>
    <recommendedName>
        <fullName evidence="2">Bucandin</fullName>
    </recommendedName>
</protein>
<keyword id="KW-0002">3D-structure</keyword>
<keyword id="KW-0903">Direct protein sequencing</keyword>
<keyword id="KW-1015">Disulfide bond</keyword>
<keyword id="KW-0528">Neurotoxin</keyword>
<keyword id="KW-0638">Presynaptic neurotoxin</keyword>
<keyword id="KW-0964">Secreted</keyword>
<keyword id="KW-0800">Toxin</keyword>
<reference key="1">
    <citation type="journal article" date="2000" name="Acta Crystallogr. D">
        <title>The atomic resolution structure of bucandin, a novel toxin isolated from the Malayan krait, determined by direct methods.</title>
        <authorList>
            <person name="Kuhn P."/>
            <person name="Deacon A.M."/>
            <person name="Comsa D.S."/>
            <person name="Rajaseger G."/>
            <person name="Kini R.M."/>
            <person name="Uson I.I."/>
            <person name="Kolatkar P.R."/>
        </authorList>
    </citation>
    <scope>PROTEIN SEQUENCE</scope>
    <scope>FUNCTION</scope>
    <scope>X-RAY CRYSTALLOGRAPHY (0.97 ANGSTROMS)</scope>
    <scope>DISULFIDE BONDS</scope>
    <scope>SUBCELLULAR LOCATION</scope>
    <scope>MASS SPECTROMETRY</scope>
    <source>
        <tissue>Venom</tissue>
    </source>
</reference>
<reference key="2">
    <citation type="journal article" date="2000" name="Acta Crystallogr. D">
        <authorList>
            <person name="Kuhn P."/>
            <person name="Deacon A.M."/>
            <person name="Comsa D.S."/>
            <person name="Rajaseger G."/>
            <person name="Kini R.M."/>
            <person name="Uson I.I."/>
            <person name="Kolatkar P.R."/>
        </authorList>
    </citation>
    <scope>ERRATUM OF PUBMED:11053837</scope>
</reference>
<reference key="3">
    <citation type="journal article" date="2001" name="Biochem. J.">
        <title>NMR structure of bucandin, a neurotoxin from the venom of the Malayan krait (Bungarus candidus).</title>
        <authorList>
            <person name="Torres A.M."/>
            <person name="Kini R.M."/>
            <person name="Selvanayagam N."/>
            <person name="Kuchel P.W."/>
        </authorList>
    </citation>
    <scope>STRUCTURE BY NMR</scope>
    <scope>DISULFIDE BONDS</scope>
    <source>
        <tissue>Venom</tissue>
    </source>
</reference>
<evidence type="ECO:0000269" key="1">
    <source>
    </source>
</evidence>
<evidence type="ECO:0000303" key="2">
    <source>
    </source>
</evidence>
<evidence type="ECO:0000305" key="3"/>
<evidence type="ECO:0000312" key="4">
    <source>
        <dbReference type="PDB" id="1F94"/>
    </source>
</evidence>
<evidence type="ECO:0000312" key="5">
    <source>
        <dbReference type="PDB" id="1IJC"/>
    </source>
</evidence>
<evidence type="ECO:0007829" key="6">
    <source>
        <dbReference type="PDB" id="1F94"/>
    </source>
</evidence>
<feature type="chain" id="PRO_0000093534" description="Bucandin" evidence="1">
    <location>
        <begin position="1"/>
        <end position="63"/>
    </location>
</feature>
<feature type="disulfide bond" evidence="1 4 5">
    <location>
        <begin position="3"/>
        <end position="24"/>
    </location>
</feature>
<feature type="disulfide bond" evidence="1 4 5">
    <location>
        <begin position="6"/>
        <end position="11"/>
    </location>
</feature>
<feature type="disulfide bond" evidence="1 4 5">
    <location>
        <begin position="17"/>
        <end position="39"/>
    </location>
</feature>
<feature type="disulfide bond" evidence="1 4 5">
    <location>
        <begin position="43"/>
        <end position="55"/>
    </location>
</feature>
<feature type="disulfide bond" evidence="1 4 5">
    <location>
        <begin position="56"/>
        <end position="61"/>
    </location>
</feature>
<feature type="strand" evidence="6">
    <location>
        <begin position="2"/>
        <end position="7"/>
    </location>
</feature>
<feature type="strand" evidence="6">
    <location>
        <begin position="10"/>
        <end position="16"/>
    </location>
</feature>
<feature type="strand" evidence="6">
    <location>
        <begin position="23"/>
        <end position="29"/>
    </location>
</feature>
<feature type="turn" evidence="6">
    <location>
        <begin position="30"/>
        <end position="32"/>
    </location>
</feature>
<feature type="strand" evidence="6">
    <location>
        <begin position="35"/>
        <end position="41"/>
    </location>
</feature>
<feature type="strand" evidence="6">
    <location>
        <begin position="46"/>
        <end position="56"/>
    </location>
</feature>